<gene>
    <name evidence="1" type="primary">ydiB</name>
    <name type="ordered locus">SeAg_B1813</name>
</gene>
<protein>
    <recommendedName>
        <fullName evidence="1">Quinate/shikimate dehydrogenase</fullName>
        <ecNumber evidence="1">1.1.1.282</ecNumber>
    </recommendedName>
    <alternativeName>
        <fullName evidence="1">NAD-dependent shikimate 5-dehydrogenase</fullName>
    </alternativeName>
</protein>
<organism>
    <name type="scientific">Salmonella agona (strain SL483)</name>
    <dbReference type="NCBI Taxonomy" id="454166"/>
    <lineage>
        <taxon>Bacteria</taxon>
        <taxon>Pseudomonadati</taxon>
        <taxon>Pseudomonadota</taxon>
        <taxon>Gammaproteobacteria</taxon>
        <taxon>Enterobacterales</taxon>
        <taxon>Enterobacteriaceae</taxon>
        <taxon>Salmonella</taxon>
    </lineage>
</organism>
<dbReference type="EC" id="1.1.1.282" evidence="1"/>
<dbReference type="EMBL" id="CP001138">
    <property type="protein sequence ID" value="ACH51056.1"/>
    <property type="molecule type" value="Genomic_DNA"/>
</dbReference>
<dbReference type="RefSeq" id="WP_000383488.1">
    <property type="nucleotide sequence ID" value="NC_011149.1"/>
</dbReference>
<dbReference type="SMR" id="B5F7D6"/>
<dbReference type="KEGG" id="sea:SeAg_B1813"/>
<dbReference type="HOGENOM" id="CLU_044063_4_4_6"/>
<dbReference type="UniPathway" id="UPA00053">
    <property type="reaction ID" value="UER00087"/>
</dbReference>
<dbReference type="Proteomes" id="UP000008819">
    <property type="component" value="Chromosome"/>
</dbReference>
<dbReference type="GO" id="GO:0030266">
    <property type="term" value="F:quinate 3-dehydrogenase (NAD+) activity"/>
    <property type="evidence" value="ECO:0007669"/>
    <property type="project" value="UniProtKB-UniRule"/>
</dbReference>
<dbReference type="GO" id="GO:0052733">
    <property type="term" value="F:quinate 3-dehydrogenase (NADP+) activity"/>
    <property type="evidence" value="ECO:0007669"/>
    <property type="project" value="InterPro"/>
</dbReference>
<dbReference type="GO" id="GO:0052734">
    <property type="term" value="F:shikimate 3-dehydrogenase (NAD+) activity"/>
    <property type="evidence" value="ECO:0007669"/>
    <property type="project" value="InterPro"/>
</dbReference>
<dbReference type="GO" id="GO:0004764">
    <property type="term" value="F:shikimate 3-dehydrogenase (NADP+) activity"/>
    <property type="evidence" value="ECO:0007669"/>
    <property type="project" value="UniProtKB-UniRule"/>
</dbReference>
<dbReference type="GO" id="GO:0008652">
    <property type="term" value="P:amino acid biosynthetic process"/>
    <property type="evidence" value="ECO:0007669"/>
    <property type="project" value="UniProtKB-KW"/>
</dbReference>
<dbReference type="GO" id="GO:0009073">
    <property type="term" value="P:aromatic amino acid family biosynthetic process"/>
    <property type="evidence" value="ECO:0007669"/>
    <property type="project" value="UniProtKB-KW"/>
</dbReference>
<dbReference type="GO" id="GO:0009423">
    <property type="term" value="P:chorismate biosynthetic process"/>
    <property type="evidence" value="ECO:0007669"/>
    <property type="project" value="UniProtKB-UniRule"/>
</dbReference>
<dbReference type="GO" id="GO:0019632">
    <property type="term" value="P:shikimate metabolic process"/>
    <property type="evidence" value="ECO:0007669"/>
    <property type="project" value="TreeGrafter"/>
</dbReference>
<dbReference type="CDD" id="cd01065">
    <property type="entry name" value="NAD_bind_Shikimate_DH"/>
    <property type="match status" value="1"/>
</dbReference>
<dbReference type="FunFam" id="3.40.50.10860:FF:000004">
    <property type="entry name" value="Quinate/shikimate dehydrogenase"/>
    <property type="match status" value="1"/>
</dbReference>
<dbReference type="FunFam" id="3.40.50.720:FF:000086">
    <property type="entry name" value="Quinate/shikimate dehydrogenase"/>
    <property type="match status" value="1"/>
</dbReference>
<dbReference type="Gene3D" id="3.40.50.10860">
    <property type="entry name" value="Leucine Dehydrogenase, chain A, domain 1"/>
    <property type="match status" value="1"/>
</dbReference>
<dbReference type="Gene3D" id="3.40.50.720">
    <property type="entry name" value="NAD(P)-binding Rossmann-like Domain"/>
    <property type="match status" value="1"/>
</dbReference>
<dbReference type="HAMAP" id="MF_00222">
    <property type="entry name" value="Shikimate_DH_AroE"/>
    <property type="match status" value="1"/>
</dbReference>
<dbReference type="HAMAP" id="MF_01578">
    <property type="entry name" value="Shikimate_DH_YdiB"/>
    <property type="match status" value="1"/>
</dbReference>
<dbReference type="InterPro" id="IPR046346">
    <property type="entry name" value="Aminoacid_DH-like_N_sf"/>
</dbReference>
<dbReference type="InterPro" id="IPR036291">
    <property type="entry name" value="NAD(P)-bd_dom_sf"/>
</dbReference>
<dbReference type="InterPro" id="IPR022872">
    <property type="entry name" value="Quinate/Shikimate_DH"/>
</dbReference>
<dbReference type="InterPro" id="IPR041121">
    <property type="entry name" value="SDH_C"/>
</dbReference>
<dbReference type="InterPro" id="IPR013708">
    <property type="entry name" value="Shikimate_DH-bd_N"/>
</dbReference>
<dbReference type="InterPro" id="IPR022893">
    <property type="entry name" value="Shikimate_DH_fam"/>
</dbReference>
<dbReference type="NCBIfam" id="NF009390">
    <property type="entry name" value="PRK12749.1"/>
    <property type="match status" value="1"/>
</dbReference>
<dbReference type="PANTHER" id="PTHR21089:SF1">
    <property type="entry name" value="BIFUNCTIONAL 3-DEHYDROQUINATE DEHYDRATASE_SHIKIMATE DEHYDROGENASE, CHLOROPLASTIC"/>
    <property type="match status" value="1"/>
</dbReference>
<dbReference type="PANTHER" id="PTHR21089">
    <property type="entry name" value="SHIKIMATE DEHYDROGENASE"/>
    <property type="match status" value="1"/>
</dbReference>
<dbReference type="Pfam" id="PF18317">
    <property type="entry name" value="SDH_C"/>
    <property type="match status" value="1"/>
</dbReference>
<dbReference type="Pfam" id="PF08501">
    <property type="entry name" value="Shikimate_dh_N"/>
    <property type="match status" value="1"/>
</dbReference>
<dbReference type="SUPFAM" id="SSF53223">
    <property type="entry name" value="Aminoacid dehydrogenase-like, N-terminal domain"/>
    <property type="match status" value="1"/>
</dbReference>
<dbReference type="SUPFAM" id="SSF51735">
    <property type="entry name" value="NAD(P)-binding Rossmann-fold domains"/>
    <property type="match status" value="1"/>
</dbReference>
<feature type="chain" id="PRO_1000147555" description="Quinate/shikimate dehydrogenase">
    <location>
        <begin position="1"/>
        <end position="288"/>
    </location>
</feature>
<feature type="binding site" evidence="1">
    <location>
        <position position="71"/>
    </location>
    <ligand>
        <name>substrate</name>
    </ligand>
</feature>
<feature type="binding site" evidence="1">
    <location>
        <position position="107"/>
    </location>
    <ligand>
        <name>substrate</name>
    </ligand>
</feature>
<feature type="binding site" evidence="1">
    <location>
        <begin position="132"/>
        <end position="135"/>
    </location>
    <ligand>
        <name>NAD(+)</name>
        <dbReference type="ChEBI" id="CHEBI:57540"/>
    </ligand>
</feature>
<feature type="binding site" evidence="1">
    <location>
        <begin position="155"/>
        <end position="158"/>
    </location>
    <ligand>
        <name>NAD(+)</name>
        <dbReference type="ChEBI" id="CHEBI:57540"/>
    </ligand>
</feature>
<feature type="binding site" evidence="1">
    <location>
        <position position="205"/>
    </location>
    <ligand>
        <name>NAD(+)</name>
        <dbReference type="ChEBI" id="CHEBI:57540"/>
    </ligand>
</feature>
<feature type="binding site" evidence="1">
    <location>
        <begin position="232"/>
        <end position="235"/>
    </location>
    <ligand>
        <name>NAD(+)</name>
        <dbReference type="ChEBI" id="CHEBI:57540"/>
    </ligand>
</feature>
<feature type="binding site" evidence="1">
    <location>
        <position position="255"/>
    </location>
    <ligand>
        <name>NAD(+)</name>
        <dbReference type="ChEBI" id="CHEBI:57540"/>
    </ligand>
</feature>
<comment type="function">
    <text evidence="1">The actual biological function of YdiB remains unclear, nor is it known whether 3-dehydroshikimate or quinate represents the natural substrate. Catalyzes the reversible NAD-dependent reduction of both 3-dehydroshikimate (DHSA) and 3-dehydroquinate to yield shikimate (SA) and quinate, respectively. It can use both NAD or NADP for catalysis, however it has higher catalytic efficiency with NAD.</text>
</comment>
<comment type="catalytic activity">
    <reaction evidence="1">
        <text>L-quinate + NAD(+) = 3-dehydroquinate + NADH + H(+)</text>
        <dbReference type="Rhea" id="RHEA:22364"/>
        <dbReference type="ChEBI" id="CHEBI:15378"/>
        <dbReference type="ChEBI" id="CHEBI:29751"/>
        <dbReference type="ChEBI" id="CHEBI:32364"/>
        <dbReference type="ChEBI" id="CHEBI:57540"/>
        <dbReference type="ChEBI" id="CHEBI:57945"/>
        <dbReference type="EC" id="1.1.1.282"/>
    </reaction>
</comment>
<comment type="catalytic activity">
    <reaction evidence="1">
        <text>L-quinate + NADP(+) = 3-dehydroquinate + NADPH + H(+)</text>
        <dbReference type="Rhea" id="RHEA:18425"/>
        <dbReference type="ChEBI" id="CHEBI:15378"/>
        <dbReference type="ChEBI" id="CHEBI:29751"/>
        <dbReference type="ChEBI" id="CHEBI:32364"/>
        <dbReference type="ChEBI" id="CHEBI:57783"/>
        <dbReference type="ChEBI" id="CHEBI:58349"/>
        <dbReference type="EC" id="1.1.1.282"/>
    </reaction>
</comment>
<comment type="catalytic activity">
    <reaction evidence="1">
        <text>shikimate + NADP(+) = 3-dehydroshikimate + NADPH + H(+)</text>
        <dbReference type="Rhea" id="RHEA:17737"/>
        <dbReference type="ChEBI" id="CHEBI:15378"/>
        <dbReference type="ChEBI" id="CHEBI:16630"/>
        <dbReference type="ChEBI" id="CHEBI:36208"/>
        <dbReference type="ChEBI" id="CHEBI:57783"/>
        <dbReference type="ChEBI" id="CHEBI:58349"/>
        <dbReference type="EC" id="1.1.1.282"/>
    </reaction>
</comment>
<comment type="catalytic activity">
    <reaction evidence="1">
        <text>shikimate + NAD(+) = 3-dehydroshikimate + NADH + H(+)</text>
        <dbReference type="Rhea" id="RHEA:17741"/>
        <dbReference type="ChEBI" id="CHEBI:15378"/>
        <dbReference type="ChEBI" id="CHEBI:16630"/>
        <dbReference type="ChEBI" id="CHEBI:36208"/>
        <dbReference type="ChEBI" id="CHEBI:57540"/>
        <dbReference type="ChEBI" id="CHEBI:57945"/>
        <dbReference type="EC" id="1.1.1.282"/>
    </reaction>
</comment>
<comment type="pathway">
    <text evidence="1">Metabolic intermediate biosynthesis; chorismate biosynthesis; chorismate from D-erythrose 4-phosphate and phosphoenolpyruvate: step 4/7.</text>
</comment>
<comment type="subunit">
    <text evidence="1">Homodimer.</text>
</comment>
<comment type="similarity">
    <text evidence="1">Belongs to the shikimate dehydrogenase family.</text>
</comment>
<proteinExistence type="inferred from homology"/>
<accession>B5F7D6</accession>
<sequence>MDVTAKYELIGLMAYPIRHSLSPEMQNKALEKAGLPYTYMAFEVDNTTFASAIEGLKALKMRGTGVSMPNKQLACEYVDELTPAAKLVGAINTIVNDDGYLRGYNTDGTGHIRAIKESGFDIRGKTMVLLGAGGAATAIGAQAAIEGIKEIKLFNRKDDFFEKAVAFAKRVNENTDCVVTVTDLADQHAFTEALASADILTNGTKVGMKPLENESLIGDVSLLRPELLVTECVYNPHMTKLLQQAQQAGCKTIDGYGMLLWQGAEQFELWTGKAFPLDYVKQVMGFTA</sequence>
<name>YDIB_SALA4</name>
<reference key="1">
    <citation type="journal article" date="2011" name="J. Bacteriol.">
        <title>Comparative genomics of 28 Salmonella enterica isolates: evidence for CRISPR-mediated adaptive sublineage evolution.</title>
        <authorList>
            <person name="Fricke W.F."/>
            <person name="Mammel M.K."/>
            <person name="McDermott P.F."/>
            <person name="Tartera C."/>
            <person name="White D.G."/>
            <person name="Leclerc J.E."/>
            <person name="Ravel J."/>
            <person name="Cebula T.A."/>
        </authorList>
    </citation>
    <scope>NUCLEOTIDE SEQUENCE [LARGE SCALE GENOMIC DNA]</scope>
    <source>
        <strain>SL483</strain>
    </source>
</reference>
<keyword id="KW-0028">Amino-acid biosynthesis</keyword>
<keyword id="KW-0057">Aromatic amino acid biosynthesis</keyword>
<keyword id="KW-0520">NAD</keyword>
<keyword id="KW-0521">NADP</keyword>
<keyword id="KW-0560">Oxidoreductase</keyword>
<evidence type="ECO:0000255" key="1">
    <source>
        <dbReference type="HAMAP-Rule" id="MF_01578"/>
    </source>
</evidence>